<reference key="1">
    <citation type="journal article" date="2007" name="Rapid Commun. Mass Spectrom.">
        <title>The venom of the snake genus Atheris contains a new class of peptides with clusters of histidine and glycine residues.</title>
        <authorList>
            <person name="Favreau P."/>
            <person name="Cheneval O."/>
            <person name="Menin L."/>
            <person name="Michalet S."/>
            <person name="Gaertner H."/>
            <person name="Principaud F."/>
            <person name="Thai R."/>
            <person name="Menez A."/>
            <person name="Bulet P."/>
            <person name="Stoecklin R."/>
        </authorList>
    </citation>
    <scope>PROTEIN SEQUENCE</scope>
    <scope>MASS SPECTROMETRY</scope>
    <source>
        <tissue>Venom</tissue>
    </source>
</reference>
<keyword id="KW-0903">Direct protein sequencing</keyword>
<keyword id="KW-0481">Metalloenzyme inhibitor</keyword>
<keyword id="KW-0483">Metalloprotease inhibitor</keyword>
<keyword id="KW-0646">Protease inhibitor</keyword>
<keyword id="KW-0964">Secreted</keyword>
<evidence type="ECO:0000250" key="1">
    <source>
        <dbReference type="UniProtKB" id="A8YPR6"/>
    </source>
</evidence>
<evidence type="ECO:0000256" key="2">
    <source>
        <dbReference type="SAM" id="MobiDB-lite"/>
    </source>
</evidence>
<evidence type="ECO:0000269" key="3">
    <source>
    </source>
</evidence>
<evidence type="ECO:0000305" key="4"/>
<comment type="function">
    <text evidence="1">May serve as a metalloproteinase inhibitor during glandular storage. Their inhibition may be instantly disengaged, by dilution or physiochemical change, when venom is injected into tissue of the victim.</text>
</comment>
<comment type="subcellular location">
    <subcellularLocation>
        <location>Secreted</location>
    </subcellularLocation>
</comment>
<comment type="tissue specificity">
    <text>Expressed by the venom gland.</text>
</comment>
<comment type="mass spectrometry"/>
<comment type="similarity">
    <text evidence="4">Belongs to the pHpG family.</text>
</comment>
<accession>P0C7K4</accession>
<feature type="peptide" id="PRO_0000335992" description="Poly-His-poly-Gly peptide 1">
    <location>
        <begin position="1"/>
        <end position="24"/>
    </location>
</feature>
<feature type="region of interest" description="Disordered" evidence="2">
    <location>
        <begin position="1"/>
        <end position="24"/>
    </location>
</feature>
<feature type="compositionally biased region" description="Basic residues" evidence="2">
    <location>
        <begin position="1"/>
        <end position="13"/>
    </location>
</feature>
<feature type="compositionally biased region" description="Gly residues" evidence="2">
    <location>
        <begin position="14"/>
        <end position="24"/>
    </location>
</feature>
<dbReference type="GO" id="GO:0005576">
    <property type="term" value="C:extracellular region"/>
    <property type="evidence" value="ECO:0007669"/>
    <property type="project" value="UniProtKB-SubCell"/>
</dbReference>
<dbReference type="GO" id="GO:0030414">
    <property type="term" value="F:peptidase inhibitor activity"/>
    <property type="evidence" value="ECO:0007669"/>
    <property type="project" value="UniProtKB-KW"/>
</dbReference>
<sequence>EDDHHHHHHHHHGVGGGGGGGGGG</sequence>
<organism>
    <name type="scientific">Atheris squamigera</name>
    <name type="common">Variable bush viper</name>
    <dbReference type="NCBI Taxonomy" id="110225"/>
    <lineage>
        <taxon>Eukaryota</taxon>
        <taxon>Metazoa</taxon>
        <taxon>Chordata</taxon>
        <taxon>Craniata</taxon>
        <taxon>Vertebrata</taxon>
        <taxon>Euteleostomi</taxon>
        <taxon>Lepidosauria</taxon>
        <taxon>Squamata</taxon>
        <taxon>Bifurcata</taxon>
        <taxon>Unidentata</taxon>
        <taxon>Episquamata</taxon>
        <taxon>Toxicofera</taxon>
        <taxon>Serpentes</taxon>
        <taxon>Colubroidea</taxon>
        <taxon>Viperidae</taxon>
        <taxon>Viperinae</taxon>
        <taxon>Atheris</taxon>
    </lineage>
</organism>
<proteinExistence type="evidence at protein level"/>
<name>SVMI1_ATHSQ</name>
<protein>
    <recommendedName>
        <fullName>Poly-His-poly-Gly peptide 1</fullName>
        <shortName>pHpG-1</shortName>
    </recommendedName>
</protein>